<protein>
    <recommendedName>
        <fullName evidence="1">Small ribosomal subunit protein uS13</fullName>
    </recommendedName>
    <alternativeName>
        <fullName evidence="3">30S ribosomal protein S13</fullName>
    </alternativeName>
</protein>
<reference key="1">
    <citation type="journal article" date="2007" name="Proc. Natl. Acad. Sci. U.S.A.">
        <title>Parallel genomic evolution and metabolic interdependence in an ancient symbiosis.</title>
        <authorList>
            <person name="McCutcheon J.P."/>
            <person name="Moran N.A."/>
        </authorList>
    </citation>
    <scope>NUCLEOTIDE SEQUENCE [LARGE SCALE GENOMIC DNA]</scope>
    <source>
        <strain>GWSS</strain>
    </source>
</reference>
<evidence type="ECO:0000255" key="1">
    <source>
        <dbReference type="HAMAP-Rule" id="MF_01315"/>
    </source>
</evidence>
<evidence type="ECO:0000256" key="2">
    <source>
        <dbReference type="SAM" id="MobiDB-lite"/>
    </source>
</evidence>
<evidence type="ECO:0000305" key="3"/>
<dbReference type="EMBL" id="CP000770">
    <property type="protein sequence ID" value="ABS30639.1"/>
    <property type="molecule type" value="Genomic_DNA"/>
</dbReference>
<dbReference type="SMR" id="A8Z688"/>
<dbReference type="STRING" id="444179.SMGWSS_242"/>
<dbReference type="KEGG" id="smg:SMGWSS_242"/>
<dbReference type="HOGENOM" id="CLU_103849_1_2_10"/>
<dbReference type="Proteomes" id="UP000000781">
    <property type="component" value="Chromosome"/>
</dbReference>
<dbReference type="GO" id="GO:0005829">
    <property type="term" value="C:cytosol"/>
    <property type="evidence" value="ECO:0007669"/>
    <property type="project" value="TreeGrafter"/>
</dbReference>
<dbReference type="GO" id="GO:0015935">
    <property type="term" value="C:small ribosomal subunit"/>
    <property type="evidence" value="ECO:0007669"/>
    <property type="project" value="TreeGrafter"/>
</dbReference>
<dbReference type="GO" id="GO:0019843">
    <property type="term" value="F:rRNA binding"/>
    <property type="evidence" value="ECO:0007669"/>
    <property type="project" value="UniProtKB-UniRule"/>
</dbReference>
<dbReference type="GO" id="GO:0003735">
    <property type="term" value="F:structural constituent of ribosome"/>
    <property type="evidence" value="ECO:0007669"/>
    <property type="project" value="InterPro"/>
</dbReference>
<dbReference type="GO" id="GO:0000049">
    <property type="term" value="F:tRNA binding"/>
    <property type="evidence" value="ECO:0007669"/>
    <property type="project" value="UniProtKB-UniRule"/>
</dbReference>
<dbReference type="GO" id="GO:0006412">
    <property type="term" value="P:translation"/>
    <property type="evidence" value="ECO:0007669"/>
    <property type="project" value="UniProtKB-UniRule"/>
</dbReference>
<dbReference type="FunFam" id="1.10.8.50:FF:000001">
    <property type="entry name" value="30S ribosomal protein S13"/>
    <property type="match status" value="1"/>
</dbReference>
<dbReference type="FunFam" id="4.10.910.10:FF:000001">
    <property type="entry name" value="30S ribosomal protein S13"/>
    <property type="match status" value="1"/>
</dbReference>
<dbReference type="Gene3D" id="1.10.8.50">
    <property type="match status" value="1"/>
</dbReference>
<dbReference type="Gene3D" id="4.10.910.10">
    <property type="entry name" value="30s ribosomal protein s13, domain 2"/>
    <property type="match status" value="1"/>
</dbReference>
<dbReference type="HAMAP" id="MF_01315">
    <property type="entry name" value="Ribosomal_uS13"/>
    <property type="match status" value="1"/>
</dbReference>
<dbReference type="InterPro" id="IPR027437">
    <property type="entry name" value="Rbsml_uS13_C"/>
</dbReference>
<dbReference type="InterPro" id="IPR001892">
    <property type="entry name" value="Ribosomal_uS13"/>
</dbReference>
<dbReference type="InterPro" id="IPR010979">
    <property type="entry name" value="Ribosomal_uS13-like_H2TH"/>
</dbReference>
<dbReference type="InterPro" id="IPR019980">
    <property type="entry name" value="Ribosomal_uS13_bac-type"/>
</dbReference>
<dbReference type="InterPro" id="IPR018269">
    <property type="entry name" value="Ribosomal_uS13_CS"/>
</dbReference>
<dbReference type="NCBIfam" id="TIGR03631">
    <property type="entry name" value="uS13_bact"/>
    <property type="match status" value="1"/>
</dbReference>
<dbReference type="PANTHER" id="PTHR10871">
    <property type="entry name" value="30S RIBOSOMAL PROTEIN S13/40S RIBOSOMAL PROTEIN S18"/>
    <property type="match status" value="1"/>
</dbReference>
<dbReference type="PANTHER" id="PTHR10871:SF1">
    <property type="entry name" value="SMALL RIBOSOMAL SUBUNIT PROTEIN US13M"/>
    <property type="match status" value="1"/>
</dbReference>
<dbReference type="Pfam" id="PF00416">
    <property type="entry name" value="Ribosomal_S13"/>
    <property type="match status" value="1"/>
</dbReference>
<dbReference type="PIRSF" id="PIRSF002134">
    <property type="entry name" value="Ribosomal_S13"/>
    <property type="match status" value="1"/>
</dbReference>
<dbReference type="SUPFAM" id="SSF46946">
    <property type="entry name" value="S13-like H2TH domain"/>
    <property type="match status" value="1"/>
</dbReference>
<dbReference type="PROSITE" id="PS00646">
    <property type="entry name" value="RIBOSOMAL_S13_1"/>
    <property type="match status" value="1"/>
</dbReference>
<dbReference type="PROSITE" id="PS50159">
    <property type="entry name" value="RIBOSOMAL_S13_2"/>
    <property type="match status" value="1"/>
</dbReference>
<sequence length="126" mass="14485">MAIVSGIEIPNNKIGLIALTYIFGIGISTSKRIFKDTGIDENIKVINWSDEDINKIRKYISSNIRIEGELRFEIQLDIKRMIEIGCYRGIRHRIGLPVRGQKTKNNCRTRKGKKKTVANKKKKINK</sequence>
<feature type="chain" id="PRO_1000086267" description="Small ribosomal subunit protein uS13">
    <location>
        <begin position="1"/>
        <end position="126"/>
    </location>
</feature>
<feature type="region of interest" description="Disordered" evidence="2">
    <location>
        <begin position="101"/>
        <end position="126"/>
    </location>
</feature>
<keyword id="KW-0687">Ribonucleoprotein</keyword>
<keyword id="KW-0689">Ribosomal protein</keyword>
<keyword id="KW-0694">RNA-binding</keyword>
<keyword id="KW-0699">rRNA-binding</keyword>
<keyword id="KW-0820">tRNA-binding</keyword>
<organism>
    <name type="scientific">Karelsulcia muelleri (strain GWSS)</name>
    <name type="common">Sulcia muelleri</name>
    <dbReference type="NCBI Taxonomy" id="444179"/>
    <lineage>
        <taxon>Bacteria</taxon>
        <taxon>Pseudomonadati</taxon>
        <taxon>Bacteroidota</taxon>
        <taxon>Flavobacteriia</taxon>
        <taxon>Flavobacteriales</taxon>
        <taxon>Candidatus Karelsulcia</taxon>
    </lineage>
</organism>
<gene>
    <name evidence="1" type="primary">rpsM</name>
    <name type="ordered locus">SMGWSS_242</name>
</gene>
<accession>A8Z688</accession>
<name>RS13_KARMG</name>
<comment type="function">
    <text evidence="1">Located at the top of the head of the 30S subunit, it contacts several helices of the 16S rRNA. In the 70S ribosome it contacts the 23S rRNA (bridge B1a) and protein L5 of the 50S subunit (bridge B1b), connecting the 2 subunits; these bridges are implicated in subunit movement. Contacts the tRNAs in the A and P-sites.</text>
</comment>
<comment type="subunit">
    <text evidence="1">Part of the 30S ribosomal subunit. Forms a loose heterodimer with protein S19. Forms two bridges to the 50S subunit in the 70S ribosome.</text>
</comment>
<comment type="similarity">
    <text evidence="1">Belongs to the universal ribosomal protein uS13 family.</text>
</comment>
<proteinExistence type="inferred from homology"/>